<reference key="1">
    <citation type="journal article" date="1997" name="J. Bacteriol.">
        <title>Complete genome sequence of Methanobacterium thermoautotrophicum deltaH: functional analysis and comparative genomics.</title>
        <authorList>
            <person name="Smith D.R."/>
            <person name="Doucette-Stamm L.A."/>
            <person name="Deloughery C."/>
            <person name="Lee H.-M."/>
            <person name="Dubois J."/>
            <person name="Aldredge T."/>
            <person name="Bashirzadeh R."/>
            <person name="Blakely D."/>
            <person name="Cook R."/>
            <person name="Gilbert K."/>
            <person name="Harrison D."/>
            <person name="Hoang L."/>
            <person name="Keagle P."/>
            <person name="Lumm W."/>
            <person name="Pothier B."/>
            <person name="Qiu D."/>
            <person name="Spadafora R."/>
            <person name="Vicare R."/>
            <person name="Wang Y."/>
            <person name="Wierzbowski J."/>
            <person name="Gibson R."/>
            <person name="Jiwani N."/>
            <person name="Caruso A."/>
            <person name="Bush D."/>
            <person name="Safer H."/>
            <person name="Patwell D."/>
            <person name="Prabhakar S."/>
            <person name="McDougall S."/>
            <person name="Shimer G."/>
            <person name="Goyal A."/>
            <person name="Pietrovski S."/>
            <person name="Church G.M."/>
            <person name="Daniels C.J."/>
            <person name="Mao J.-I."/>
            <person name="Rice P."/>
            <person name="Noelling J."/>
            <person name="Reeve J.N."/>
        </authorList>
    </citation>
    <scope>NUCLEOTIDE SEQUENCE [LARGE SCALE GENOMIC DNA]</scope>
    <source>
        <strain>ATCC 29096 / DSM 1053 / JCM 10044 / NBRC 100330 / Delta H</strain>
    </source>
</reference>
<comment type="similarity">
    <text evidence="1">Belongs to the UPF0201 family.</text>
</comment>
<gene>
    <name type="ordered locus">MTH_433</name>
</gene>
<protein>
    <recommendedName>
        <fullName>UPF0201 protein MTH_433</fullName>
    </recommendedName>
</protein>
<feature type="chain" id="PRO_0000094512" description="UPF0201 protein MTH_433">
    <location>
        <begin position="1"/>
        <end position="132"/>
    </location>
</feature>
<organism>
    <name type="scientific">Methanothermobacter thermautotrophicus (strain ATCC 29096 / DSM 1053 / JCM 10044 / NBRC 100330 / Delta H)</name>
    <name type="common">Methanobacterium thermoautotrophicum</name>
    <dbReference type="NCBI Taxonomy" id="187420"/>
    <lineage>
        <taxon>Archaea</taxon>
        <taxon>Methanobacteriati</taxon>
        <taxon>Methanobacteriota</taxon>
        <taxon>Methanomada group</taxon>
        <taxon>Methanobacteria</taxon>
        <taxon>Methanobacteriales</taxon>
        <taxon>Methanobacteriaceae</taxon>
        <taxon>Methanothermobacter</taxon>
    </lineage>
</organism>
<name>Y433_METTH</name>
<dbReference type="EMBL" id="AE000666">
    <property type="protein sequence ID" value="AAB84939.1"/>
    <property type="molecule type" value="Genomic_DNA"/>
</dbReference>
<dbReference type="PIR" id="E69156">
    <property type="entry name" value="E69156"/>
</dbReference>
<dbReference type="RefSeq" id="WP_010876072.1">
    <property type="nucleotide sequence ID" value="NC_000916.1"/>
</dbReference>
<dbReference type="SMR" id="O26533"/>
<dbReference type="STRING" id="187420.MTH_433"/>
<dbReference type="PaxDb" id="187420-MTH_433"/>
<dbReference type="DNASU" id="1470394"/>
<dbReference type="EnsemblBacteria" id="AAB84939">
    <property type="protein sequence ID" value="AAB84939"/>
    <property type="gene ID" value="MTH_433"/>
</dbReference>
<dbReference type="GeneID" id="1470394"/>
<dbReference type="KEGG" id="mth:MTH_433"/>
<dbReference type="HOGENOM" id="CLU_134829_1_0_2"/>
<dbReference type="InParanoid" id="O26533"/>
<dbReference type="Proteomes" id="UP000005223">
    <property type="component" value="Chromosome"/>
</dbReference>
<dbReference type="Gene3D" id="3.30.1440.10">
    <property type="match status" value="1"/>
</dbReference>
<dbReference type="HAMAP" id="MF_01112">
    <property type="entry name" value="UPF0201"/>
    <property type="match status" value="1"/>
</dbReference>
<dbReference type="InterPro" id="IPR002739">
    <property type="entry name" value="PAB1135-like"/>
</dbReference>
<dbReference type="InterPro" id="IPR022803">
    <property type="entry name" value="Ribosomal_uL5_dom_sf"/>
</dbReference>
<dbReference type="PANTHER" id="PTHR39652">
    <property type="entry name" value="UPF0201 PROTEIN TK1335"/>
    <property type="match status" value="1"/>
</dbReference>
<dbReference type="PANTHER" id="PTHR39652:SF1">
    <property type="entry name" value="UPF0201 PROTEIN TK1335"/>
    <property type="match status" value="1"/>
</dbReference>
<dbReference type="Pfam" id="PF01877">
    <property type="entry name" value="RNA_binding"/>
    <property type="match status" value="1"/>
</dbReference>
<dbReference type="SUPFAM" id="SSF55282">
    <property type="entry name" value="RL5-like"/>
    <property type="match status" value="1"/>
</dbReference>
<proteinExistence type="inferred from homology"/>
<accession>O26533</accession>
<evidence type="ECO:0000305" key="1"/>
<sequence length="132" mass="14812">MDKVKVEAPVRATEDPEKVGEAVLNVFPELEIEVEDDAVRGTGDSGSLRNLQEVLEKRRIRLTARNILKKHLRDNSTWFYINKQAALMNRVNVLEESISALGDILVEIESDDIMGLIDWLAPDVSVPEDVAD</sequence>
<keyword id="KW-1185">Reference proteome</keyword>